<protein>
    <recommendedName>
        <fullName>Beta-galactosidase 8</fullName>
        <shortName>Lactase 8</shortName>
        <ecNumber>3.2.1.23</ecNumber>
    </recommendedName>
    <alternativeName>
        <fullName>Protein AR782</fullName>
    </alternativeName>
</protein>
<keyword id="KW-0025">Alternative splicing</keyword>
<keyword id="KW-0052">Apoplast</keyword>
<keyword id="KW-0325">Glycoprotein</keyword>
<keyword id="KW-0326">Glycosidase</keyword>
<keyword id="KW-0378">Hydrolase</keyword>
<keyword id="KW-1185">Reference proteome</keyword>
<keyword id="KW-0964">Secreted</keyword>
<keyword id="KW-0732">Signal</keyword>
<gene>
    <name type="primary">BGAL8</name>
    <name type="ordered locus">At2g28470</name>
    <name type="ORF">T17D12.3</name>
</gene>
<dbReference type="EC" id="3.2.1.23"/>
<dbReference type="EMBL" id="AJ270304">
    <property type="protein sequence ID" value="CAB64744.1"/>
    <property type="molecule type" value="mRNA"/>
</dbReference>
<dbReference type="EMBL" id="AC006587">
    <property type="protein sequence ID" value="AAD21482.1"/>
    <property type="status" value="ALT_SEQ"/>
    <property type="molecule type" value="Genomic_DNA"/>
</dbReference>
<dbReference type="EMBL" id="CP002685">
    <property type="protein sequence ID" value="AEC08127.1"/>
    <property type="molecule type" value="Genomic_DNA"/>
</dbReference>
<dbReference type="EMBL" id="CP002685">
    <property type="protein sequence ID" value="ANM62009.1"/>
    <property type="molecule type" value="Genomic_DNA"/>
</dbReference>
<dbReference type="EMBL" id="D88744">
    <property type="protein sequence ID" value="BAA13685.1"/>
    <property type="molecule type" value="mRNA"/>
</dbReference>
<dbReference type="PIR" id="C84685">
    <property type="entry name" value="C84685"/>
</dbReference>
<dbReference type="RefSeq" id="NP_001324192.1">
    <molecule id="Q9SCV4-1"/>
    <property type="nucleotide sequence ID" value="NM_001336165.1"/>
</dbReference>
<dbReference type="RefSeq" id="NP_850121.1">
    <molecule id="Q9SCV4-1"/>
    <property type="nucleotide sequence ID" value="NM_179790.3"/>
</dbReference>
<dbReference type="SMR" id="Q9SCV4"/>
<dbReference type="FunCoup" id="Q9SCV4">
    <property type="interactions" value="41"/>
</dbReference>
<dbReference type="STRING" id="3702.Q9SCV4"/>
<dbReference type="CAZy" id="GH35">
    <property type="family name" value="Glycoside Hydrolase Family 35"/>
</dbReference>
<dbReference type="GlyCosmos" id="Q9SCV4">
    <property type="glycosylation" value="5 sites, No reported glycans"/>
</dbReference>
<dbReference type="GlyGen" id="Q9SCV4">
    <property type="glycosylation" value="5 sites"/>
</dbReference>
<dbReference type="PaxDb" id="3702-AT2G28470.1"/>
<dbReference type="ProteomicsDB" id="240654">
    <molecule id="Q9SCV4-1"/>
</dbReference>
<dbReference type="EnsemblPlants" id="AT2G28470.1">
    <molecule id="Q9SCV4-1"/>
    <property type="protein sequence ID" value="AT2G28470.1"/>
    <property type="gene ID" value="AT2G28470"/>
</dbReference>
<dbReference type="EnsemblPlants" id="AT2G28470.3">
    <molecule id="Q9SCV4-1"/>
    <property type="protein sequence ID" value="AT2G28470.3"/>
    <property type="gene ID" value="AT2G28470"/>
</dbReference>
<dbReference type="GeneID" id="817395"/>
<dbReference type="Gramene" id="AT2G28470.1">
    <molecule id="Q9SCV4-1"/>
    <property type="protein sequence ID" value="AT2G28470.1"/>
    <property type="gene ID" value="AT2G28470"/>
</dbReference>
<dbReference type="Gramene" id="AT2G28470.3">
    <molecule id="Q9SCV4-1"/>
    <property type="protein sequence ID" value="AT2G28470.3"/>
    <property type="gene ID" value="AT2G28470"/>
</dbReference>
<dbReference type="KEGG" id="ath:AT2G28470"/>
<dbReference type="Araport" id="AT2G28470"/>
<dbReference type="TAIR" id="AT2G28470">
    <property type="gene designation" value="BGAL8"/>
</dbReference>
<dbReference type="eggNOG" id="KOG0496">
    <property type="taxonomic scope" value="Eukaryota"/>
</dbReference>
<dbReference type="InParanoid" id="Q9SCV4"/>
<dbReference type="PhylomeDB" id="Q9SCV4"/>
<dbReference type="BioCyc" id="ARA:AT2G28470-MONOMER"/>
<dbReference type="PRO" id="PR:Q9SCV4"/>
<dbReference type="Proteomes" id="UP000006548">
    <property type="component" value="Chromosome 2"/>
</dbReference>
<dbReference type="ExpressionAtlas" id="Q9SCV4">
    <property type="expression patterns" value="baseline and differential"/>
</dbReference>
<dbReference type="GO" id="GO:0048046">
    <property type="term" value="C:apoplast"/>
    <property type="evidence" value="ECO:0007669"/>
    <property type="project" value="UniProtKB-SubCell"/>
</dbReference>
<dbReference type="GO" id="GO:0004565">
    <property type="term" value="F:beta-galactosidase activity"/>
    <property type="evidence" value="ECO:0007669"/>
    <property type="project" value="UniProtKB-EC"/>
</dbReference>
<dbReference type="GO" id="GO:0030246">
    <property type="term" value="F:carbohydrate binding"/>
    <property type="evidence" value="ECO:0007669"/>
    <property type="project" value="InterPro"/>
</dbReference>
<dbReference type="GO" id="GO:0005975">
    <property type="term" value="P:carbohydrate metabolic process"/>
    <property type="evidence" value="ECO:0007669"/>
    <property type="project" value="InterPro"/>
</dbReference>
<dbReference type="CDD" id="cd22842">
    <property type="entry name" value="Gal_Rha_Lectin_BGal"/>
    <property type="match status" value="1"/>
</dbReference>
<dbReference type="FunFam" id="2.60.120.260:FF:000076">
    <property type="entry name" value="Beta-galactosidase"/>
    <property type="match status" value="1"/>
</dbReference>
<dbReference type="FunFam" id="2.60.120.260:FF:000117">
    <property type="entry name" value="Beta-galactosidase"/>
    <property type="match status" value="1"/>
</dbReference>
<dbReference type="FunFam" id="2.60.120.260:FF:000142">
    <property type="entry name" value="Beta-galactosidase"/>
    <property type="match status" value="1"/>
</dbReference>
<dbReference type="FunFam" id="3.20.20.80:FF:000021">
    <property type="entry name" value="Beta-galactosidase"/>
    <property type="match status" value="1"/>
</dbReference>
<dbReference type="Gene3D" id="2.60.120.740">
    <property type="match status" value="1"/>
</dbReference>
<dbReference type="Gene3D" id="2.60.120.260">
    <property type="entry name" value="Galactose-binding domain-like"/>
    <property type="match status" value="2"/>
</dbReference>
<dbReference type="Gene3D" id="3.20.20.80">
    <property type="entry name" value="Glycosidases"/>
    <property type="match status" value="1"/>
</dbReference>
<dbReference type="InterPro" id="IPR048913">
    <property type="entry name" value="BetaGal_gal-bd"/>
</dbReference>
<dbReference type="InterPro" id="IPR008979">
    <property type="entry name" value="Galactose-bd-like_sf"/>
</dbReference>
<dbReference type="InterPro" id="IPR041392">
    <property type="entry name" value="GHD"/>
</dbReference>
<dbReference type="InterPro" id="IPR031330">
    <property type="entry name" value="Gly_Hdrlase_35_cat"/>
</dbReference>
<dbReference type="InterPro" id="IPR019801">
    <property type="entry name" value="Glyco_hydro_35_CS"/>
</dbReference>
<dbReference type="InterPro" id="IPR001944">
    <property type="entry name" value="Glycoside_Hdrlase_35"/>
</dbReference>
<dbReference type="InterPro" id="IPR017853">
    <property type="entry name" value="Glycoside_hydrolase_SF"/>
</dbReference>
<dbReference type="InterPro" id="IPR000922">
    <property type="entry name" value="Lectin_gal-bd_dom"/>
</dbReference>
<dbReference type="InterPro" id="IPR043159">
    <property type="entry name" value="Lectin_gal-bd_sf"/>
</dbReference>
<dbReference type="PANTHER" id="PTHR23421">
    <property type="entry name" value="BETA-GALACTOSIDASE RELATED"/>
    <property type="match status" value="1"/>
</dbReference>
<dbReference type="Pfam" id="PF21467">
    <property type="entry name" value="BetaGal_gal-bd"/>
    <property type="match status" value="1"/>
</dbReference>
<dbReference type="Pfam" id="PF17834">
    <property type="entry name" value="GHD"/>
    <property type="match status" value="1"/>
</dbReference>
<dbReference type="Pfam" id="PF01301">
    <property type="entry name" value="Glyco_hydro_35"/>
    <property type="match status" value="1"/>
</dbReference>
<dbReference type="Pfam" id="PF02140">
    <property type="entry name" value="SUEL_Lectin"/>
    <property type="match status" value="1"/>
</dbReference>
<dbReference type="PRINTS" id="PR00742">
    <property type="entry name" value="GLHYDRLASE35"/>
</dbReference>
<dbReference type="SUPFAM" id="SSF51445">
    <property type="entry name" value="(Trans)glycosidases"/>
    <property type="match status" value="1"/>
</dbReference>
<dbReference type="SUPFAM" id="SSF49785">
    <property type="entry name" value="Galactose-binding domain-like"/>
    <property type="match status" value="2"/>
</dbReference>
<dbReference type="PROSITE" id="PS01182">
    <property type="entry name" value="GLYCOSYL_HYDROL_F35"/>
    <property type="match status" value="1"/>
</dbReference>
<dbReference type="PROSITE" id="PS50228">
    <property type="entry name" value="SUEL_LECTIN"/>
    <property type="match status" value="1"/>
</dbReference>
<comment type="catalytic activity">
    <reaction>
        <text>Hydrolysis of terminal non-reducing beta-D-galactose residues in beta-D-galactosides.</text>
        <dbReference type="EC" id="3.2.1.23"/>
    </reaction>
</comment>
<comment type="subcellular location">
    <subcellularLocation>
        <location evidence="5">Secreted</location>
        <location evidence="5">Extracellular space</location>
        <location evidence="5">Apoplast</location>
    </subcellularLocation>
</comment>
<comment type="alternative products">
    <event type="alternative splicing"/>
    <isoform>
        <id>Q9SCV4-1</id>
        <name>1</name>
        <sequence type="displayed"/>
    </isoform>
    <text>A number of isoforms are produced. According to EST sequences.</text>
</comment>
<comment type="tissue specificity">
    <text evidence="3 4">Expressed in roots, flowers and siliques.</text>
</comment>
<comment type="similarity">
    <text evidence="5">Belongs to the glycosyl hydrolase 35 family.</text>
</comment>
<comment type="sequence caution" evidence="5">
    <conflict type="erroneous gene model prediction">
        <sequence resource="EMBL-CDS" id="AAD21482"/>
    </conflict>
</comment>
<name>BGAL8_ARATH</name>
<reference key="1">
    <citation type="submission" date="1999-10" db="EMBL/GenBank/DDBJ databases">
        <title>The beta-galactosidases are encoding by a multigene family in Arabidopsis thaliana.</title>
        <authorList>
            <person name="Gy I."/>
            <person name="Kreis M."/>
            <person name="Lecharny A."/>
        </authorList>
    </citation>
    <scope>NUCLEOTIDE SEQUENCE [MRNA]</scope>
</reference>
<reference key="2">
    <citation type="journal article" date="1999" name="Nature">
        <title>Sequence and analysis of chromosome 2 of the plant Arabidopsis thaliana.</title>
        <authorList>
            <person name="Lin X."/>
            <person name="Kaul S."/>
            <person name="Rounsley S.D."/>
            <person name="Shea T.P."/>
            <person name="Benito M.-I."/>
            <person name="Town C.D."/>
            <person name="Fujii C.Y."/>
            <person name="Mason T.M."/>
            <person name="Bowman C.L."/>
            <person name="Barnstead M.E."/>
            <person name="Feldblyum T.V."/>
            <person name="Buell C.R."/>
            <person name="Ketchum K.A."/>
            <person name="Lee J.J."/>
            <person name="Ronning C.M."/>
            <person name="Koo H.L."/>
            <person name="Moffat K.S."/>
            <person name="Cronin L.A."/>
            <person name="Shen M."/>
            <person name="Pai G."/>
            <person name="Van Aken S."/>
            <person name="Umayam L."/>
            <person name="Tallon L.J."/>
            <person name="Gill J.E."/>
            <person name="Adams M.D."/>
            <person name="Carrera A.J."/>
            <person name="Creasy T.H."/>
            <person name="Goodman H.M."/>
            <person name="Somerville C.R."/>
            <person name="Copenhaver G.P."/>
            <person name="Preuss D."/>
            <person name="Nierman W.C."/>
            <person name="White O."/>
            <person name="Eisen J.A."/>
            <person name="Salzberg S.L."/>
            <person name="Fraser C.M."/>
            <person name="Venter J.C."/>
        </authorList>
    </citation>
    <scope>NUCLEOTIDE SEQUENCE [LARGE SCALE GENOMIC DNA]</scope>
    <source>
        <strain>cv. Columbia</strain>
    </source>
</reference>
<reference key="3">
    <citation type="journal article" date="2017" name="Plant J.">
        <title>Araport11: a complete reannotation of the Arabidopsis thaliana reference genome.</title>
        <authorList>
            <person name="Cheng C.Y."/>
            <person name="Krishnakumar V."/>
            <person name="Chan A.P."/>
            <person name="Thibaud-Nissen F."/>
            <person name="Schobel S."/>
            <person name="Town C.D."/>
        </authorList>
    </citation>
    <scope>GENOME REANNOTATION</scope>
    <source>
        <strain>cv. Columbia</strain>
    </source>
</reference>
<reference key="4">
    <citation type="journal article" date="1997" name="FEBS Lett.">
        <title>Functional cloning of a cDNA encoding Mei2-like protein from Arabidopsis thaliana using a fission yeast pheromone receptor deficient mutant.</title>
        <authorList>
            <person name="Hirayama T."/>
            <person name="Ishida C."/>
            <person name="Kuromori T."/>
            <person name="Obata S."/>
            <person name="Shimoda C."/>
            <person name="Yamamoto M."/>
            <person name="Shinozaki K."/>
            <person name="Ohto C."/>
        </authorList>
    </citation>
    <scope>NUCLEOTIDE SEQUENCE [MRNA] OF 647-852</scope>
</reference>
<reference key="5">
    <citation type="journal article" date="2006" name="Plant Cell Physiol.">
        <title>Apoplastic glycosidases active against xyloglucan oligosaccharides of Arabidopsis thaliana.</title>
        <authorList>
            <person name="Iglesias N."/>
            <person name="Abelenda J.A."/>
            <person name="Rodino M."/>
            <person name="Sampedro J."/>
            <person name="Revilla G."/>
            <person name="Zarra I."/>
        </authorList>
    </citation>
    <scope>TISSUE SPECIFICITY</scope>
</reference>
<reference key="6">
    <citation type="journal article" date="2007" name="Phytochemistry">
        <title>Functional genomic analysis of Arabidopsis thaliana glycoside hydrolase family 35.</title>
        <authorList>
            <person name="Ahn Y.O."/>
            <person name="Zheng M."/>
            <person name="Bevan D.R."/>
            <person name="Esen A."/>
            <person name="Shiu S.-H."/>
            <person name="Benson J."/>
            <person name="Peng H.-P."/>
            <person name="Miller J.T."/>
            <person name="Cheng C.-L."/>
            <person name="Poulton J.E."/>
            <person name="Shih M.-C."/>
        </authorList>
    </citation>
    <scope>TISSUE SPECIFICITY</scope>
    <scope>GENE FAMILY</scope>
    <scope>NOMENCLATURE</scope>
</reference>
<sequence>MEIAAKMVKVRKMEMILLLILVIVVAATAANVTYDHRALVIDGKRKVLISGSIHYPRSTPEMWPELIQKSKDGGLDVIETYVFWSGHEPEKNKYNFEGRYDLVKFVKLAAKAGLYVHLRIGPYVCAEWNYGGFPVWLHFVPGIKFRTDNEPFKEEMQRFTTKIVDLMKQEKLYASQGGPIILSQIENEYGNIDSAYGAAAKSYIKWSASMALSLDTGVPWNMCQQTDAPDPMINTCNGFYCDQFTPNSNNKPKMWTENWSGWFLGFGDPSPYRPVEDLAFAVARFYQRGGTFQNYYMYHGGTNFDRTSGGPLISTSYDYDAPIDEYGLLRQPKWGHLRDLHKAIKLCEDALIATDPTITSLGSNLEAAVYKTESGSCAAFLANVDTKSDATVTFNGKSYNLPAWSVSILPDCKNVAFNTAKINSATESTAFARQSLKPDGGSSAELGSQWSYIKEPIGISKADAFLKPGLLEQINTTADKSDYLWYSLRTDIKGDETFLDEGSKAVLHIESLGQVVYAFINGKLAGSGHGKQKISLDIPINLVTGTNTIDLLSVTVGLANYGAFFDLVGAGITGPVTLKSAKGGSSIDLASQQWTYQVGLKGEDTGLATVDSSEWVSKSPLPTKQPLIWYKTTFDAPSGSEPVAIDFTGTGKGIAWVNGQSIGRYWPTSIAGNGGCTESCDYRGSYRANKCLKNCGKPSQTLYHVPRSWLKPSGNILVLFEEMGGDPTQISFATKQTGSNLCLTVSQSHPPPVDTWTSDSKISNRNRTRPVLSLKCPISTQVIFSIKFASFGTPKGTCGSFTQGHCNSSRSLSLVQKACIGLRSCNVEVSTRVFGEPCRGVVKSLAVEASCS</sequence>
<accession>Q9SCV4</accession>
<accession>Q96257</accession>
<accession>Q9SK11</accession>
<evidence type="ECO:0000255" key="1"/>
<evidence type="ECO:0000255" key="2">
    <source>
        <dbReference type="PROSITE-ProRule" id="PRU00260"/>
    </source>
</evidence>
<evidence type="ECO:0000269" key="3">
    <source>
    </source>
</evidence>
<evidence type="ECO:0000269" key="4">
    <source>
    </source>
</evidence>
<evidence type="ECO:0000305" key="5"/>
<organism>
    <name type="scientific">Arabidopsis thaliana</name>
    <name type="common">Mouse-ear cress</name>
    <dbReference type="NCBI Taxonomy" id="3702"/>
    <lineage>
        <taxon>Eukaryota</taxon>
        <taxon>Viridiplantae</taxon>
        <taxon>Streptophyta</taxon>
        <taxon>Embryophyta</taxon>
        <taxon>Tracheophyta</taxon>
        <taxon>Spermatophyta</taxon>
        <taxon>Magnoliopsida</taxon>
        <taxon>eudicotyledons</taxon>
        <taxon>Gunneridae</taxon>
        <taxon>Pentapetalae</taxon>
        <taxon>rosids</taxon>
        <taxon>malvids</taxon>
        <taxon>Brassicales</taxon>
        <taxon>Brassicaceae</taxon>
        <taxon>Camelineae</taxon>
        <taxon>Arabidopsis</taxon>
    </lineage>
</organism>
<feature type="signal peptide" evidence="1">
    <location>
        <begin position="1"/>
        <end position="29"/>
    </location>
</feature>
<feature type="chain" id="PRO_5000065882" description="Beta-galactosidase 8">
    <location>
        <begin position="30"/>
        <end position="852"/>
    </location>
</feature>
<feature type="domain" description="SUEL-type lectin" evidence="2">
    <location>
        <begin position="766"/>
        <end position="852"/>
    </location>
</feature>
<feature type="active site" description="Proton donor" evidence="1">
    <location>
        <position position="188"/>
    </location>
</feature>
<feature type="active site" description="Nucleophile" evidence="1">
    <location>
        <position position="257"/>
    </location>
</feature>
<feature type="glycosylation site" description="N-linked (GlcNAc...) asparagine" evidence="1">
    <location>
        <position position="31"/>
    </location>
</feature>
<feature type="glycosylation site" description="N-linked (GlcNAc...) asparagine" evidence="1">
    <location>
        <position position="258"/>
    </location>
</feature>
<feature type="glycosylation site" description="N-linked (GlcNAc...) asparagine" evidence="1">
    <location>
        <position position="475"/>
    </location>
</feature>
<feature type="glycosylation site" description="N-linked (GlcNAc...) asparagine" evidence="1">
    <location>
        <position position="766"/>
    </location>
</feature>
<feature type="glycosylation site" description="N-linked (GlcNAc...) asparagine" evidence="1">
    <location>
        <position position="807"/>
    </location>
</feature>
<feature type="sequence conflict" description="In Ref. 1; CAB64744." evidence="5" ref="1">
    <original>V</original>
    <variation>M</variation>
    <location>
        <position position="568"/>
    </location>
</feature>
<feature type="sequence conflict" description="In Ref. 4; BAA13685." evidence="5" ref="4">
    <original>FT</original>
    <variation>TA</variation>
    <location>
        <begin position="647"/>
        <end position="648"/>
    </location>
</feature>
<proteinExistence type="evidence at transcript level"/>